<reference key="1">
    <citation type="journal article" date="2002" name="Nat. Biotechnol.">
        <title>Genome sequence of the dissimilatory metal ion-reducing bacterium Shewanella oneidensis.</title>
        <authorList>
            <person name="Heidelberg J.F."/>
            <person name="Paulsen I.T."/>
            <person name="Nelson K.E."/>
            <person name="Gaidos E.J."/>
            <person name="Nelson W.C."/>
            <person name="Read T.D."/>
            <person name="Eisen J.A."/>
            <person name="Seshadri R."/>
            <person name="Ward N.L."/>
            <person name="Methe B.A."/>
            <person name="Clayton R.A."/>
            <person name="Meyer T."/>
            <person name="Tsapin A."/>
            <person name="Scott J."/>
            <person name="Beanan M.J."/>
            <person name="Brinkac L.M."/>
            <person name="Daugherty S.C."/>
            <person name="DeBoy R.T."/>
            <person name="Dodson R.J."/>
            <person name="Durkin A.S."/>
            <person name="Haft D.H."/>
            <person name="Kolonay J.F."/>
            <person name="Madupu R."/>
            <person name="Peterson J.D."/>
            <person name="Umayam L.A."/>
            <person name="White O."/>
            <person name="Wolf A.M."/>
            <person name="Vamathevan J.J."/>
            <person name="Weidman J.F."/>
            <person name="Impraim M."/>
            <person name="Lee K."/>
            <person name="Berry K.J."/>
            <person name="Lee C."/>
            <person name="Mueller J."/>
            <person name="Khouri H.M."/>
            <person name="Gill J."/>
            <person name="Utterback T.R."/>
            <person name="McDonald L.A."/>
            <person name="Feldblyum T.V."/>
            <person name="Smith H.O."/>
            <person name="Venter J.C."/>
            <person name="Nealson K.H."/>
            <person name="Fraser C.M."/>
        </authorList>
    </citation>
    <scope>NUCLEOTIDE SEQUENCE [LARGE SCALE GENOMIC DNA]</scope>
    <source>
        <strain>ATCC 700550 / JCM 31522 / CIP 106686 / LMG 19005 / NCIMB 14063 / MR-1</strain>
    </source>
</reference>
<sequence length="342" mass="37193">MSYLMLDLLSLDVSEAEAEMLRHPQVGGLILFSRNFTSREQLIALVQQIRQIRPEILIAVDHEGGRVQRFREGFTLIPAMGDILPAAKGDMALAKRWACELGFLMAIELLACDIDLSFAPVLDLNGISQVIGKRSFSANPDEVIALARSFIEGMAQAGMGAVGKHFPGHGSVAADSHIAQPIDEREGEVIFNQDILPFKELIFNGKLSGIMPAHVIYPKVDPNPAGFSSYWLKQILRKELGFNGVIFSDDLGMKGASFAGDYVGRAKAALDAGCDMILVCNDNPGVMTLLNGFVWPEAAPQHPASLLKPNMAQTALALENSARWENAKQLAEQIQLAQQAKV</sequence>
<gene>
    <name evidence="1" type="primary">nagZ</name>
    <name type="ordered locus">SO_2250</name>
</gene>
<proteinExistence type="inferred from homology"/>
<protein>
    <recommendedName>
        <fullName evidence="1">Beta-hexosaminidase</fullName>
        <ecNumber evidence="1">3.2.1.52</ecNumber>
    </recommendedName>
    <alternativeName>
        <fullName evidence="1">Beta-N-acetylhexosaminidase</fullName>
    </alternativeName>
    <alternativeName>
        <fullName evidence="1">N-acetyl-beta-glucosaminidase</fullName>
    </alternativeName>
</protein>
<name>NAGZ_SHEON</name>
<dbReference type="EC" id="3.2.1.52" evidence="1"/>
<dbReference type="EMBL" id="AE014299">
    <property type="protein sequence ID" value="AAN55290.1"/>
    <property type="molecule type" value="Genomic_DNA"/>
</dbReference>
<dbReference type="RefSeq" id="NP_717846.1">
    <property type="nucleotide sequence ID" value="NC_004347.2"/>
</dbReference>
<dbReference type="RefSeq" id="WP_011072263.1">
    <property type="nucleotide sequence ID" value="NC_004347.2"/>
</dbReference>
<dbReference type="SMR" id="Q8EEW2"/>
<dbReference type="STRING" id="211586.SO_2250"/>
<dbReference type="CAZy" id="GH3">
    <property type="family name" value="Glycoside Hydrolase Family 3"/>
</dbReference>
<dbReference type="PaxDb" id="211586-SO_2250"/>
<dbReference type="KEGG" id="son:SO_2250"/>
<dbReference type="PATRIC" id="fig|211586.12.peg.2166"/>
<dbReference type="eggNOG" id="COG1472">
    <property type="taxonomic scope" value="Bacteria"/>
</dbReference>
<dbReference type="HOGENOM" id="CLU_008392_0_0_6"/>
<dbReference type="OrthoDB" id="9786661at2"/>
<dbReference type="PhylomeDB" id="Q8EEW2"/>
<dbReference type="BioCyc" id="SONE211586:G1GMP-2055-MONOMER"/>
<dbReference type="UniPathway" id="UPA00544"/>
<dbReference type="Proteomes" id="UP000008186">
    <property type="component" value="Chromosome"/>
</dbReference>
<dbReference type="GO" id="GO:0005829">
    <property type="term" value="C:cytosol"/>
    <property type="evidence" value="ECO:0000318"/>
    <property type="project" value="GO_Central"/>
</dbReference>
<dbReference type="GO" id="GO:0016231">
    <property type="term" value="F:beta-N-acetylglucosaminidase activity"/>
    <property type="evidence" value="ECO:0000318"/>
    <property type="project" value="GO_Central"/>
</dbReference>
<dbReference type="GO" id="GO:0005975">
    <property type="term" value="P:carbohydrate metabolic process"/>
    <property type="evidence" value="ECO:0007669"/>
    <property type="project" value="InterPro"/>
</dbReference>
<dbReference type="GO" id="GO:0051301">
    <property type="term" value="P:cell division"/>
    <property type="evidence" value="ECO:0007669"/>
    <property type="project" value="UniProtKB-KW"/>
</dbReference>
<dbReference type="GO" id="GO:0071555">
    <property type="term" value="P:cell wall organization"/>
    <property type="evidence" value="ECO:0007669"/>
    <property type="project" value="UniProtKB-KW"/>
</dbReference>
<dbReference type="GO" id="GO:0009252">
    <property type="term" value="P:peptidoglycan biosynthetic process"/>
    <property type="evidence" value="ECO:0007669"/>
    <property type="project" value="UniProtKB-KW"/>
</dbReference>
<dbReference type="GO" id="GO:0009254">
    <property type="term" value="P:peptidoglycan turnover"/>
    <property type="evidence" value="ECO:0000318"/>
    <property type="project" value="GO_Central"/>
</dbReference>
<dbReference type="GO" id="GO:0008360">
    <property type="term" value="P:regulation of cell shape"/>
    <property type="evidence" value="ECO:0007669"/>
    <property type="project" value="UniProtKB-KW"/>
</dbReference>
<dbReference type="FunFam" id="3.20.20.300:FF:000001">
    <property type="entry name" value="Beta-hexosaminidase"/>
    <property type="match status" value="1"/>
</dbReference>
<dbReference type="Gene3D" id="3.20.20.300">
    <property type="entry name" value="Glycoside hydrolase, family 3, N-terminal domain"/>
    <property type="match status" value="1"/>
</dbReference>
<dbReference type="HAMAP" id="MF_00364">
    <property type="entry name" value="NagZ"/>
    <property type="match status" value="1"/>
</dbReference>
<dbReference type="InterPro" id="IPR022956">
    <property type="entry name" value="Beta_hexosaminidase_bac"/>
</dbReference>
<dbReference type="InterPro" id="IPR019800">
    <property type="entry name" value="Glyco_hydro_3_AS"/>
</dbReference>
<dbReference type="InterPro" id="IPR001764">
    <property type="entry name" value="Glyco_hydro_3_N"/>
</dbReference>
<dbReference type="InterPro" id="IPR036962">
    <property type="entry name" value="Glyco_hydro_3_N_sf"/>
</dbReference>
<dbReference type="InterPro" id="IPR017853">
    <property type="entry name" value="Glycoside_hydrolase_SF"/>
</dbReference>
<dbReference type="InterPro" id="IPR050226">
    <property type="entry name" value="NagZ_Beta-hexosaminidase"/>
</dbReference>
<dbReference type="NCBIfam" id="NF003740">
    <property type="entry name" value="PRK05337.1"/>
    <property type="match status" value="1"/>
</dbReference>
<dbReference type="PANTHER" id="PTHR30480:SF13">
    <property type="entry name" value="BETA-HEXOSAMINIDASE"/>
    <property type="match status" value="1"/>
</dbReference>
<dbReference type="PANTHER" id="PTHR30480">
    <property type="entry name" value="BETA-HEXOSAMINIDASE-RELATED"/>
    <property type="match status" value="1"/>
</dbReference>
<dbReference type="Pfam" id="PF00933">
    <property type="entry name" value="Glyco_hydro_3"/>
    <property type="match status" value="1"/>
</dbReference>
<dbReference type="SUPFAM" id="SSF51445">
    <property type="entry name" value="(Trans)glycosidases"/>
    <property type="match status" value="1"/>
</dbReference>
<dbReference type="PROSITE" id="PS00775">
    <property type="entry name" value="GLYCOSYL_HYDROL_F3"/>
    <property type="match status" value="1"/>
</dbReference>
<evidence type="ECO:0000255" key="1">
    <source>
        <dbReference type="HAMAP-Rule" id="MF_00364"/>
    </source>
</evidence>
<keyword id="KW-0131">Cell cycle</keyword>
<keyword id="KW-0132">Cell division</keyword>
<keyword id="KW-0133">Cell shape</keyword>
<keyword id="KW-0961">Cell wall biogenesis/degradation</keyword>
<keyword id="KW-0963">Cytoplasm</keyword>
<keyword id="KW-0326">Glycosidase</keyword>
<keyword id="KW-0378">Hydrolase</keyword>
<keyword id="KW-0573">Peptidoglycan synthesis</keyword>
<keyword id="KW-1185">Reference proteome</keyword>
<accession>Q8EEW2</accession>
<comment type="function">
    <text evidence="1">Plays a role in peptidoglycan recycling by cleaving the terminal beta-1,4-linked N-acetylglucosamine (GlcNAc) from peptide-linked peptidoglycan fragments, giving rise to free GlcNAc, anhydro-N-acetylmuramic acid and anhydro-N-acetylmuramic acid-linked peptides.</text>
</comment>
<comment type="catalytic activity">
    <reaction evidence="1">
        <text>Hydrolysis of terminal non-reducing N-acetyl-D-hexosamine residues in N-acetyl-beta-D-hexosaminides.</text>
        <dbReference type="EC" id="3.2.1.52"/>
    </reaction>
</comment>
<comment type="pathway">
    <text evidence="1">Cell wall biogenesis; peptidoglycan recycling.</text>
</comment>
<comment type="subcellular location">
    <subcellularLocation>
        <location evidence="1">Cytoplasm</location>
    </subcellularLocation>
</comment>
<comment type="similarity">
    <text evidence="1">Belongs to the glycosyl hydrolase 3 family. NagZ subfamily.</text>
</comment>
<feature type="chain" id="PRO_0000210798" description="Beta-hexosaminidase">
    <location>
        <begin position="1"/>
        <end position="342"/>
    </location>
</feature>
<feature type="active site" description="Proton donor/acceptor" evidence="1">
    <location>
        <position position="177"/>
    </location>
</feature>
<feature type="active site" description="Nucleophile" evidence="1">
    <location>
        <position position="249"/>
    </location>
</feature>
<feature type="binding site" evidence="1">
    <location>
        <position position="61"/>
    </location>
    <ligand>
        <name>substrate</name>
    </ligand>
</feature>
<feature type="binding site" evidence="1">
    <location>
        <position position="69"/>
    </location>
    <ligand>
        <name>substrate</name>
    </ligand>
</feature>
<feature type="binding site" evidence="1">
    <location>
        <position position="134"/>
    </location>
    <ligand>
        <name>substrate</name>
    </ligand>
</feature>
<feature type="binding site" evidence="1">
    <location>
        <begin position="164"/>
        <end position="165"/>
    </location>
    <ligand>
        <name>substrate</name>
    </ligand>
</feature>
<feature type="site" description="Important for catalytic activity" evidence="1">
    <location>
        <position position="175"/>
    </location>
</feature>
<organism>
    <name type="scientific">Shewanella oneidensis (strain ATCC 700550 / JCM 31522 / CIP 106686 / LMG 19005 / NCIMB 14063 / MR-1)</name>
    <dbReference type="NCBI Taxonomy" id="211586"/>
    <lineage>
        <taxon>Bacteria</taxon>
        <taxon>Pseudomonadati</taxon>
        <taxon>Pseudomonadota</taxon>
        <taxon>Gammaproteobacteria</taxon>
        <taxon>Alteromonadales</taxon>
        <taxon>Shewanellaceae</taxon>
        <taxon>Shewanella</taxon>
    </lineage>
</organism>